<protein>
    <recommendedName>
        <fullName evidence="1">Molybdenum cofactor guanylyltransferase</fullName>
        <shortName evidence="1">MoCo guanylyltransferase</shortName>
        <ecNumber evidence="1">2.7.7.77</ecNumber>
    </recommendedName>
    <alternativeName>
        <fullName evidence="1">GTP:molybdopterin guanylyltransferase</fullName>
    </alternativeName>
    <alternativeName>
        <fullName evidence="1">Mo-MPT guanylyltransferase</fullName>
    </alternativeName>
    <alternativeName>
        <fullName evidence="1">Molybdopterin guanylyltransferase</fullName>
    </alternativeName>
    <alternativeName>
        <fullName evidence="1">Molybdopterin-guanine dinucleotide synthase</fullName>
        <shortName evidence="1">MGD synthase</shortName>
    </alternativeName>
</protein>
<comment type="function">
    <text evidence="1">Transfers a GMP moiety from GTP to Mo-molybdopterin (Mo-MPT) cofactor (Moco or molybdenum cofactor) to form Mo-molybdopterin guanine dinucleotide (Mo-MGD) cofactor.</text>
</comment>
<comment type="catalytic activity">
    <reaction evidence="1">
        <text>Mo-molybdopterin + GTP + H(+) = Mo-molybdopterin guanine dinucleotide + diphosphate</text>
        <dbReference type="Rhea" id="RHEA:34243"/>
        <dbReference type="ChEBI" id="CHEBI:15378"/>
        <dbReference type="ChEBI" id="CHEBI:33019"/>
        <dbReference type="ChEBI" id="CHEBI:37565"/>
        <dbReference type="ChEBI" id="CHEBI:71302"/>
        <dbReference type="ChEBI" id="CHEBI:71310"/>
        <dbReference type="EC" id="2.7.7.77"/>
    </reaction>
</comment>
<comment type="cofactor">
    <cofactor evidence="1">
        <name>Mg(2+)</name>
        <dbReference type="ChEBI" id="CHEBI:18420"/>
    </cofactor>
</comment>
<comment type="subunit">
    <text evidence="1">Monomer.</text>
</comment>
<comment type="subcellular location">
    <subcellularLocation>
        <location evidence="1">Cytoplasm</location>
    </subcellularLocation>
</comment>
<comment type="domain">
    <text evidence="1">The N-terminal domain determines nucleotide recognition and specific binding, while the C-terminal domain determines the specific binding to the target protein.</text>
</comment>
<comment type="similarity">
    <text evidence="1">Belongs to the MobA family.</text>
</comment>
<accession>Q21YF3</accession>
<organism>
    <name type="scientific">Albidiferax ferrireducens (strain ATCC BAA-621 / DSM 15236 / T118)</name>
    <name type="common">Rhodoferax ferrireducens</name>
    <dbReference type="NCBI Taxonomy" id="338969"/>
    <lineage>
        <taxon>Bacteria</taxon>
        <taxon>Pseudomonadati</taxon>
        <taxon>Pseudomonadota</taxon>
        <taxon>Betaproteobacteria</taxon>
        <taxon>Burkholderiales</taxon>
        <taxon>Comamonadaceae</taxon>
        <taxon>Rhodoferax</taxon>
    </lineage>
</organism>
<gene>
    <name evidence="1" type="primary">mobA</name>
    <name type="ordered locus">Rfer_1467</name>
</gene>
<keyword id="KW-0963">Cytoplasm</keyword>
<keyword id="KW-0342">GTP-binding</keyword>
<keyword id="KW-0460">Magnesium</keyword>
<keyword id="KW-0479">Metal-binding</keyword>
<keyword id="KW-0501">Molybdenum cofactor biosynthesis</keyword>
<keyword id="KW-0547">Nucleotide-binding</keyword>
<keyword id="KW-1185">Reference proteome</keyword>
<keyword id="KW-0808">Transferase</keyword>
<reference key="1">
    <citation type="submission" date="2006-02" db="EMBL/GenBank/DDBJ databases">
        <title>Complete sequence of chromosome of Rhodoferax ferrireducens DSM 15236.</title>
        <authorList>
            <person name="Copeland A."/>
            <person name="Lucas S."/>
            <person name="Lapidus A."/>
            <person name="Barry K."/>
            <person name="Detter J.C."/>
            <person name="Glavina del Rio T."/>
            <person name="Hammon N."/>
            <person name="Israni S."/>
            <person name="Pitluck S."/>
            <person name="Brettin T."/>
            <person name="Bruce D."/>
            <person name="Han C."/>
            <person name="Tapia R."/>
            <person name="Gilna P."/>
            <person name="Kiss H."/>
            <person name="Schmutz J."/>
            <person name="Larimer F."/>
            <person name="Land M."/>
            <person name="Kyrpides N."/>
            <person name="Ivanova N."/>
            <person name="Richardson P."/>
        </authorList>
    </citation>
    <scope>NUCLEOTIDE SEQUENCE [LARGE SCALE GENOMIC DNA]</scope>
    <source>
        <strain>ATCC BAA-621 / DSM 15236 / T118</strain>
    </source>
</reference>
<evidence type="ECO:0000255" key="1">
    <source>
        <dbReference type="HAMAP-Rule" id="MF_00316"/>
    </source>
</evidence>
<proteinExistence type="inferred from homology"/>
<feature type="chain" id="PRO_1000019140" description="Molybdenum cofactor guanylyltransferase">
    <location>
        <begin position="1"/>
        <end position="211"/>
    </location>
</feature>
<feature type="binding site" evidence="1">
    <location>
        <begin position="12"/>
        <end position="14"/>
    </location>
    <ligand>
        <name>GTP</name>
        <dbReference type="ChEBI" id="CHEBI:37565"/>
    </ligand>
</feature>
<feature type="binding site" evidence="1">
    <location>
        <position position="25"/>
    </location>
    <ligand>
        <name>GTP</name>
        <dbReference type="ChEBI" id="CHEBI:37565"/>
    </ligand>
</feature>
<feature type="binding site" evidence="1">
    <location>
        <position position="55"/>
    </location>
    <ligand>
        <name>GTP</name>
        <dbReference type="ChEBI" id="CHEBI:37565"/>
    </ligand>
</feature>
<feature type="binding site" evidence="1">
    <location>
        <position position="73"/>
    </location>
    <ligand>
        <name>GTP</name>
        <dbReference type="ChEBI" id="CHEBI:37565"/>
    </ligand>
</feature>
<feature type="binding site" evidence="1">
    <location>
        <position position="103"/>
    </location>
    <ligand>
        <name>GTP</name>
        <dbReference type="ChEBI" id="CHEBI:37565"/>
    </ligand>
</feature>
<feature type="binding site" evidence="1">
    <location>
        <position position="103"/>
    </location>
    <ligand>
        <name>Mg(2+)</name>
        <dbReference type="ChEBI" id="CHEBI:18420"/>
    </ligand>
</feature>
<name>MOBA_ALBFT</name>
<sequence>MIPAQDITGLILAGGRGSRMGGVDKGLQTFNGMPLALHTLTRLQMGGGVGQIMINANRNLAAYESFGASVWPDGLADYAGPLAGFLTGLEHCETPFLVTVPCDTPRLPLDLVPRLAAALEAENADIAMVAAPEIGKDGQVRLRPQPVFCLLRVELLESLVRFTQEGGRKIDAWTALHKTAVAPFDLPHDDPLAFFNANTLAELHQLENNPA</sequence>
<dbReference type="EC" id="2.7.7.77" evidence="1"/>
<dbReference type="EMBL" id="CP000267">
    <property type="protein sequence ID" value="ABD69200.1"/>
    <property type="molecule type" value="Genomic_DNA"/>
</dbReference>
<dbReference type="RefSeq" id="WP_011463768.1">
    <property type="nucleotide sequence ID" value="NC_007908.1"/>
</dbReference>
<dbReference type="SMR" id="Q21YF3"/>
<dbReference type="STRING" id="338969.Rfer_1467"/>
<dbReference type="KEGG" id="rfr:Rfer_1467"/>
<dbReference type="eggNOG" id="COG0746">
    <property type="taxonomic scope" value="Bacteria"/>
</dbReference>
<dbReference type="HOGENOM" id="CLU_055597_5_1_4"/>
<dbReference type="OrthoDB" id="9788394at2"/>
<dbReference type="Proteomes" id="UP000008332">
    <property type="component" value="Chromosome"/>
</dbReference>
<dbReference type="GO" id="GO:0005737">
    <property type="term" value="C:cytoplasm"/>
    <property type="evidence" value="ECO:0007669"/>
    <property type="project" value="UniProtKB-SubCell"/>
</dbReference>
<dbReference type="GO" id="GO:0005525">
    <property type="term" value="F:GTP binding"/>
    <property type="evidence" value="ECO:0007669"/>
    <property type="project" value="UniProtKB-UniRule"/>
</dbReference>
<dbReference type="GO" id="GO:0046872">
    <property type="term" value="F:metal ion binding"/>
    <property type="evidence" value="ECO:0007669"/>
    <property type="project" value="UniProtKB-KW"/>
</dbReference>
<dbReference type="GO" id="GO:0061603">
    <property type="term" value="F:molybdenum cofactor guanylyltransferase activity"/>
    <property type="evidence" value="ECO:0007669"/>
    <property type="project" value="UniProtKB-EC"/>
</dbReference>
<dbReference type="GO" id="GO:1902758">
    <property type="term" value="P:bis(molybdopterin guanine dinucleotide)molybdenum biosynthetic process"/>
    <property type="evidence" value="ECO:0007669"/>
    <property type="project" value="TreeGrafter"/>
</dbReference>
<dbReference type="CDD" id="cd02503">
    <property type="entry name" value="MobA"/>
    <property type="match status" value="1"/>
</dbReference>
<dbReference type="Gene3D" id="3.90.550.10">
    <property type="entry name" value="Spore Coat Polysaccharide Biosynthesis Protein SpsA, Chain A"/>
    <property type="match status" value="1"/>
</dbReference>
<dbReference type="HAMAP" id="MF_00316">
    <property type="entry name" value="MobA"/>
    <property type="match status" value="1"/>
</dbReference>
<dbReference type="InterPro" id="IPR025877">
    <property type="entry name" value="MobA-like_NTP_Trfase"/>
</dbReference>
<dbReference type="InterPro" id="IPR013482">
    <property type="entry name" value="Molybde_CF_guanTrfase"/>
</dbReference>
<dbReference type="InterPro" id="IPR029044">
    <property type="entry name" value="Nucleotide-diphossugar_trans"/>
</dbReference>
<dbReference type="NCBIfam" id="TIGR02665">
    <property type="entry name" value="molyb_mobA"/>
    <property type="match status" value="1"/>
</dbReference>
<dbReference type="PANTHER" id="PTHR19136">
    <property type="entry name" value="MOLYBDENUM COFACTOR GUANYLYLTRANSFERASE"/>
    <property type="match status" value="1"/>
</dbReference>
<dbReference type="PANTHER" id="PTHR19136:SF81">
    <property type="entry name" value="MOLYBDENUM COFACTOR GUANYLYLTRANSFERASE"/>
    <property type="match status" value="1"/>
</dbReference>
<dbReference type="Pfam" id="PF12804">
    <property type="entry name" value="NTP_transf_3"/>
    <property type="match status" value="1"/>
</dbReference>
<dbReference type="SUPFAM" id="SSF53448">
    <property type="entry name" value="Nucleotide-diphospho-sugar transferases"/>
    <property type="match status" value="1"/>
</dbReference>